<organism>
    <name type="scientific">Aromatoleum aromaticum (strain DSM 19018 / LMG 30748 / EbN1)</name>
    <name type="common">Azoarcus sp. (strain EbN1)</name>
    <dbReference type="NCBI Taxonomy" id="76114"/>
    <lineage>
        <taxon>Bacteria</taxon>
        <taxon>Pseudomonadati</taxon>
        <taxon>Pseudomonadota</taxon>
        <taxon>Betaproteobacteria</taxon>
        <taxon>Rhodocyclales</taxon>
        <taxon>Rhodocyclaceae</taxon>
        <taxon>Aromatoleum</taxon>
    </lineage>
</organism>
<dbReference type="EC" id="2.7.4.3" evidence="1"/>
<dbReference type="EMBL" id="CR555306">
    <property type="protein sequence ID" value="CAI09008.1"/>
    <property type="molecule type" value="Genomic_DNA"/>
</dbReference>
<dbReference type="RefSeq" id="WP_011238689.1">
    <property type="nucleotide sequence ID" value="NC_006513.1"/>
</dbReference>
<dbReference type="SMR" id="Q5P106"/>
<dbReference type="STRING" id="76114.ebA5087"/>
<dbReference type="KEGG" id="eba:ebA5087"/>
<dbReference type="eggNOG" id="COG0563">
    <property type="taxonomic scope" value="Bacteria"/>
</dbReference>
<dbReference type="HOGENOM" id="CLU_032354_1_2_4"/>
<dbReference type="OrthoDB" id="9805030at2"/>
<dbReference type="UniPathway" id="UPA00588">
    <property type="reaction ID" value="UER00649"/>
</dbReference>
<dbReference type="Proteomes" id="UP000006552">
    <property type="component" value="Chromosome"/>
</dbReference>
<dbReference type="GO" id="GO:0005737">
    <property type="term" value="C:cytoplasm"/>
    <property type="evidence" value="ECO:0007669"/>
    <property type="project" value="UniProtKB-SubCell"/>
</dbReference>
<dbReference type="GO" id="GO:0004017">
    <property type="term" value="F:adenylate kinase activity"/>
    <property type="evidence" value="ECO:0007669"/>
    <property type="project" value="UniProtKB-UniRule"/>
</dbReference>
<dbReference type="GO" id="GO:0005524">
    <property type="term" value="F:ATP binding"/>
    <property type="evidence" value="ECO:0007669"/>
    <property type="project" value="UniProtKB-UniRule"/>
</dbReference>
<dbReference type="GO" id="GO:0044209">
    <property type="term" value="P:AMP salvage"/>
    <property type="evidence" value="ECO:0007669"/>
    <property type="project" value="UniProtKB-UniRule"/>
</dbReference>
<dbReference type="CDD" id="cd01428">
    <property type="entry name" value="ADK"/>
    <property type="match status" value="1"/>
</dbReference>
<dbReference type="FunFam" id="3.40.50.300:FF:000106">
    <property type="entry name" value="Adenylate kinase mitochondrial"/>
    <property type="match status" value="1"/>
</dbReference>
<dbReference type="Gene3D" id="3.40.50.300">
    <property type="entry name" value="P-loop containing nucleotide triphosphate hydrolases"/>
    <property type="match status" value="1"/>
</dbReference>
<dbReference type="HAMAP" id="MF_00235">
    <property type="entry name" value="Adenylate_kinase_Adk"/>
    <property type="match status" value="1"/>
</dbReference>
<dbReference type="InterPro" id="IPR006259">
    <property type="entry name" value="Adenyl_kin_sub"/>
</dbReference>
<dbReference type="InterPro" id="IPR000850">
    <property type="entry name" value="Adenylat/UMP-CMP_kin"/>
</dbReference>
<dbReference type="InterPro" id="IPR033690">
    <property type="entry name" value="Adenylat_kinase_CS"/>
</dbReference>
<dbReference type="InterPro" id="IPR007862">
    <property type="entry name" value="Adenylate_kinase_lid-dom"/>
</dbReference>
<dbReference type="InterPro" id="IPR027417">
    <property type="entry name" value="P-loop_NTPase"/>
</dbReference>
<dbReference type="NCBIfam" id="TIGR01351">
    <property type="entry name" value="adk"/>
    <property type="match status" value="1"/>
</dbReference>
<dbReference type="NCBIfam" id="NF001379">
    <property type="entry name" value="PRK00279.1-1"/>
    <property type="match status" value="1"/>
</dbReference>
<dbReference type="NCBIfam" id="NF001380">
    <property type="entry name" value="PRK00279.1-2"/>
    <property type="match status" value="1"/>
</dbReference>
<dbReference type="NCBIfam" id="NF001381">
    <property type="entry name" value="PRK00279.1-3"/>
    <property type="match status" value="1"/>
</dbReference>
<dbReference type="NCBIfam" id="NF011100">
    <property type="entry name" value="PRK14527.1"/>
    <property type="match status" value="1"/>
</dbReference>
<dbReference type="PANTHER" id="PTHR23359">
    <property type="entry name" value="NUCLEOTIDE KINASE"/>
    <property type="match status" value="1"/>
</dbReference>
<dbReference type="Pfam" id="PF00406">
    <property type="entry name" value="ADK"/>
    <property type="match status" value="1"/>
</dbReference>
<dbReference type="Pfam" id="PF05191">
    <property type="entry name" value="ADK_lid"/>
    <property type="match status" value="1"/>
</dbReference>
<dbReference type="PRINTS" id="PR00094">
    <property type="entry name" value="ADENYLTKNASE"/>
</dbReference>
<dbReference type="SUPFAM" id="SSF52540">
    <property type="entry name" value="P-loop containing nucleoside triphosphate hydrolases"/>
    <property type="match status" value="1"/>
</dbReference>
<dbReference type="PROSITE" id="PS00113">
    <property type="entry name" value="ADENYLATE_KINASE"/>
    <property type="match status" value="1"/>
</dbReference>
<name>KAD_AROAE</name>
<evidence type="ECO:0000255" key="1">
    <source>
        <dbReference type="HAMAP-Rule" id="MF_00235"/>
    </source>
</evidence>
<feature type="chain" id="PRO_1000058783" description="Adenylate kinase">
    <location>
        <begin position="1"/>
        <end position="217"/>
    </location>
</feature>
<feature type="region of interest" description="NMP" evidence="1">
    <location>
        <begin position="30"/>
        <end position="59"/>
    </location>
</feature>
<feature type="region of interest" description="LID" evidence="1">
    <location>
        <begin position="122"/>
        <end position="159"/>
    </location>
</feature>
<feature type="binding site" evidence="1">
    <location>
        <begin position="10"/>
        <end position="15"/>
    </location>
    <ligand>
        <name>ATP</name>
        <dbReference type="ChEBI" id="CHEBI:30616"/>
    </ligand>
</feature>
<feature type="binding site" evidence="1">
    <location>
        <position position="31"/>
    </location>
    <ligand>
        <name>AMP</name>
        <dbReference type="ChEBI" id="CHEBI:456215"/>
    </ligand>
</feature>
<feature type="binding site" evidence="1">
    <location>
        <position position="36"/>
    </location>
    <ligand>
        <name>AMP</name>
        <dbReference type="ChEBI" id="CHEBI:456215"/>
    </ligand>
</feature>
<feature type="binding site" evidence="1">
    <location>
        <begin position="57"/>
        <end position="59"/>
    </location>
    <ligand>
        <name>AMP</name>
        <dbReference type="ChEBI" id="CHEBI:456215"/>
    </ligand>
</feature>
<feature type="binding site" evidence="1">
    <location>
        <begin position="85"/>
        <end position="88"/>
    </location>
    <ligand>
        <name>AMP</name>
        <dbReference type="ChEBI" id="CHEBI:456215"/>
    </ligand>
</feature>
<feature type="binding site" evidence="1">
    <location>
        <position position="92"/>
    </location>
    <ligand>
        <name>AMP</name>
        <dbReference type="ChEBI" id="CHEBI:456215"/>
    </ligand>
</feature>
<feature type="binding site" evidence="1">
    <location>
        <position position="123"/>
    </location>
    <ligand>
        <name>ATP</name>
        <dbReference type="ChEBI" id="CHEBI:30616"/>
    </ligand>
</feature>
<feature type="binding site" evidence="1">
    <location>
        <begin position="132"/>
        <end position="133"/>
    </location>
    <ligand>
        <name>ATP</name>
        <dbReference type="ChEBI" id="CHEBI:30616"/>
    </ligand>
</feature>
<feature type="binding site" evidence="1">
    <location>
        <position position="156"/>
    </location>
    <ligand>
        <name>AMP</name>
        <dbReference type="ChEBI" id="CHEBI:456215"/>
    </ligand>
</feature>
<feature type="binding site" evidence="1">
    <location>
        <position position="167"/>
    </location>
    <ligand>
        <name>AMP</name>
        <dbReference type="ChEBI" id="CHEBI:456215"/>
    </ligand>
</feature>
<feature type="binding site" evidence="1">
    <location>
        <position position="203"/>
    </location>
    <ligand>
        <name>ATP</name>
        <dbReference type="ChEBI" id="CHEBI:30616"/>
    </ligand>
</feature>
<keyword id="KW-0067">ATP-binding</keyword>
<keyword id="KW-0963">Cytoplasm</keyword>
<keyword id="KW-0418">Kinase</keyword>
<keyword id="KW-0545">Nucleotide biosynthesis</keyword>
<keyword id="KW-0547">Nucleotide-binding</keyword>
<keyword id="KW-1185">Reference proteome</keyword>
<keyword id="KW-0808">Transferase</keyword>
<accession>Q5P106</accession>
<protein>
    <recommendedName>
        <fullName evidence="1">Adenylate kinase</fullName>
        <shortName evidence="1">AK</shortName>
        <ecNumber evidence="1">2.7.4.3</ecNumber>
    </recommendedName>
    <alternativeName>
        <fullName evidence="1">ATP-AMP transphosphorylase</fullName>
    </alternativeName>
    <alternativeName>
        <fullName evidence="1">ATP:AMP phosphotransferase</fullName>
    </alternativeName>
    <alternativeName>
        <fullName evidence="1">Adenylate monophosphate kinase</fullName>
    </alternativeName>
</protein>
<reference key="1">
    <citation type="journal article" date="2005" name="Arch. Microbiol.">
        <title>The genome sequence of an anaerobic aromatic-degrading denitrifying bacterium, strain EbN1.</title>
        <authorList>
            <person name="Rabus R."/>
            <person name="Kube M."/>
            <person name="Heider J."/>
            <person name="Beck A."/>
            <person name="Heitmann K."/>
            <person name="Widdel F."/>
            <person name="Reinhardt R."/>
        </authorList>
    </citation>
    <scope>NUCLEOTIDE SEQUENCE [LARGE SCALE GENOMIC DNA]</scope>
    <source>
        <strain>DSM 19018 / LMG 30748 / EbN1</strain>
    </source>
</reference>
<proteinExistence type="inferred from homology"/>
<gene>
    <name evidence="1" type="primary">adk</name>
    <name type="ordered locus">AZOSEA28830</name>
    <name type="ORF">ebA5087</name>
</gene>
<sequence length="217" mass="23586">MRLILLGPPGAGKGTQANFIKEKFGIPQISTGDMLRAAVKAGTPLGVEAKKVMDAGGLVSDDIIIGLVKDRLKEDDCKSGYMFDGFPRTIPQADAMKEAGVPIDFVLEIDVPDSEIIERMSGRRAHLASGRTYHVKYNPPKVAGKDDLTGEDLVQRDDDREETVAKRLEVYHSQTKPLVEYYSKWAASGEPGTPKVRKISGLGAVDEITSRAFAALK</sequence>
<comment type="function">
    <text evidence="1">Catalyzes the reversible transfer of the terminal phosphate group between ATP and AMP. Plays an important role in cellular energy homeostasis and in adenine nucleotide metabolism.</text>
</comment>
<comment type="catalytic activity">
    <reaction evidence="1">
        <text>AMP + ATP = 2 ADP</text>
        <dbReference type="Rhea" id="RHEA:12973"/>
        <dbReference type="ChEBI" id="CHEBI:30616"/>
        <dbReference type="ChEBI" id="CHEBI:456215"/>
        <dbReference type="ChEBI" id="CHEBI:456216"/>
        <dbReference type="EC" id="2.7.4.3"/>
    </reaction>
</comment>
<comment type="pathway">
    <text evidence="1">Purine metabolism; AMP biosynthesis via salvage pathway; AMP from ADP: step 1/1.</text>
</comment>
<comment type="subunit">
    <text evidence="1">Monomer.</text>
</comment>
<comment type="subcellular location">
    <subcellularLocation>
        <location evidence="1">Cytoplasm</location>
    </subcellularLocation>
</comment>
<comment type="domain">
    <text evidence="1">Consists of three domains, a large central CORE domain and two small peripheral domains, NMPbind and LID, which undergo movements during catalysis. The LID domain closes over the site of phosphoryl transfer upon ATP binding. Assembling and dissambling the active center during each catalytic cycle provides an effective means to prevent ATP hydrolysis.</text>
</comment>
<comment type="similarity">
    <text evidence="1">Belongs to the adenylate kinase family.</text>
</comment>